<sequence>MSIKEDKWIREMALNADMIHPFVNGQVNVNEETGEKLISYGLSSYGYDLRLSREFKVFTNVYNSVVDPKCFTEDIFISITDDVCIVPPNSFALARSVEYFRIPRNVLTMCIGKSTYARCGIIVNVTPFEPEWEGHVTIEISNTTPLPAKIYANEGIAQVLFFESSTTCEVSYADRKGKYQKQQGITVPCV</sequence>
<dbReference type="EC" id="3.5.4.13" evidence="1"/>
<dbReference type="EMBL" id="AE001363">
    <property type="protein sequence ID" value="AAD18535.1"/>
    <property type="molecule type" value="Genomic_DNA"/>
</dbReference>
<dbReference type="EMBL" id="AE002161">
    <property type="protein sequence ID" value="AAF38212.1"/>
    <property type="molecule type" value="Genomic_DNA"/>
</dbReference>
<dbReference type="EMBL" id="BA000008">
    <property type="protein sequence ID" value="BAA98600.1"/>
    <property type="molecule type" value="Genomic_DNA"/>
</dbReference>
<dbReference type="EMBL" id="AE009440">
    <property type="protein sequence ID" value="AAP98335.1"/>
    <property type="molecule type" value="Genomic_DNA"/>
</dbReference>
<dbReference type="PIR" id="F72084">
    <property type="entry name" value="F72084"/>
</dbReference>
<dbReference type="PIR" id="F86539">
    <property type="entry name" value="F86539"/>
</dbReference>
<dbReference type="RefSeq" id="NP_224592.1">
    <property type="nucleotide sequence ID" value="NC_000922.1"/>
</dbReference>
<dbReference type="RefSeq" id="WP_010883035.1">
    <property type="nucleotide sequence ID" value="NZ_LN847257.1"/>
</dbReference>
<dbReference type="SMR" id="Q9Z8F1"/>
<dbReference type="STRING" id="406984.CPK_ORF00902"/>
<dbReference type="GeneID" id="45050439"/>
<dbReference type="KEGG" id="cpa:CP_0363"/>
<dbReference type="KEGG" id="cpj:dcd"/>
<dbReference type="KEGG" id="cpn:CPn_0392"/>
<dbReference type="KEGG" id="cpt:CpB0404"/>
<dbReference type="PATRIC" id="fig|115713.3.peg.434"/>
<dbReference type="eggNOG" id="COG0717">
    <property type="taxonomic scope" value="Bacteria"/>
</dbReference>
<dbReference type="HOGENOM" id="CLU_087476_4_0_0"/>
<dbReference type="OMA" id="FENHRYP"/>
<dbReference type="OrthoDB" id="9780202at2"/>
<dbReference type="UniPathway" id="UPA00610">
    <property type="reaction ID" value="UER00665"/>
</dbReference>
<dbReference type="Proteomes" id="UP000000583">
    <property type="component" value="Chromosome"/>
</dbReference>
<dbReference type="Proteomes" id="UP000000801">
    <property type="component" value="Chromosome"/>
</dbReference>
<dbReference type="GO" id="GO:0008829">
    <property type="term" value="F:dCTP deaminase activity"/>
    <property type="evidence" value="ECO:0007669"/>
    <property type="project" value="UniProtKB-UniRule"/>
</dbReference>
<dbReference type="GO" id="GO:0000166">
    <property type="term" value="F:nucleotide binding"/>
    <property type="evidence" value="ECO:0007669"/>
    <property type="project" value="UniProtKB-KW"/>
</dbReference>
<dbReference type="GO" id="GO:0006226">
    <property type="term" value="P:dUMP biosynthetic process"/>
    <property type="evidence" value="ECO:0007669"/>
    <property type="project" value="UniProtKB-UniPathway"/>
</dbReference>
<dbReference type="GO" id="GO:0006229">
    <property type="term" value="P:dUTP biosynthetic process"/>
    <property type="evidence" value="ECO:0007669"/>
    <property type="project" value="UniProtKB-UniRule"/>
</dbReference>
<dbReference type="GO" id="GO:0015949">
    <property type="term" value="P:nucleobase-containing small molecule interconversion"/>
    <property type="evidence" value="ECO:0007669"/>
    <property type="project" value="TreeGrafter"/>
</dbReference>
<dbReference type="CDD" id="cd07557">
    <property type="entry name" value="trimeric_dUTPase"/>
    <property type="match status" value="1"/>
</dbReference>
<dbReference type="FunFam" id="2.70.40.10:FF:000001">
    <property type="entry name" value="dCTP deaminase"/>
    <property type="match status" value="1"/>
</dbReference>
<dbReference type="Gene3D" id="2.70.40.10">
    <property type="match status" value="1"/>
</dbReference>
<dbReference type="HAMAP" id="MF_00146">
    <property type="entry name" value="dCTP_deaminase"/>
    <property type="match status" value="1"/>
</dbReference>
<dbReference type="InterPro" id="IPR011962">
    <property type="entry name" value="dCTP_deaminase"/>
</dbReference>
<dbReference type="InterPro" id="IPR036157">
    <property type="entry name" value="dUTPase-like_sf"/>
</dbReference>
<dbReference type="InterPro" id="IPR033704">
    <property type="entry name" value="dUTPase_trimeric"/>
</dbReference>
<dbReference type="NCBIfam" id="TIGR02274">
    <property type="entry name" value="dCTP_deam"/>
    <property type="match status" value="1"/>
</dbReference>
<dbReference type="PANTHER" id="PTHR42680">
    <property type="entry name" value="DCTP DEAMINASE"/>
    <property type="match status" value="1"/>
</dbReference>
<dbReference type="PANTHER" id="PTHR42680:SF3">
    <property type="entry name" value="DCTP DEAMINASE"/>
    <property type="match status" value="1"/>
</dbReference>
<dbReference type="Pfam" id="PF22769">
    <property type="entry name" value="DCD"/>
    <property type="match status" value="1"/>
</dbReference>
<dbReference type="SUPFAM" id="SSF51283">
    <property type="entry name" value="dUTPase-like"/>
    <property type="match status" value="1"/>
</dbReference>
<protein>
    <recommendedName>
        <fullName evidence="1">dCTP deaminase</fullName>
        <ecNumber evidence="1">3.5.4.13</ecNumber>
    </recommendedName>
    <alternativeName>
        <fullName evidence="1">Deoxycytidine triphosphate deaminase</fullName>
    </alternativeName>
</protein>
<name>DCD_CHLPN</name>
<gene>
    <name evidence="1" type="primary">dcd</name>
    <name type="ordered locus">CPn_0392</name>
    <name type="ordered locus">CP_0363</name>
    <name type="ordered locus">CpB0404</name>
</gene>
<organism>
    <name type="scientific">Chlamydia pneumoniae</name>
    <name type="common">Chlamydophila pneumoniae</name>
    <dbReference type="NCBI Taxonomy" id="83558"/>
    <lineage>
        <taxon>Bacteria</taxon>
        <taxon>Pseudomonadati</taxon>
        <taxon>Chlamydiota</taxon>
        <taxon>Chlamydiia</taxon>
        <taxon>Chlamydiales</taxon>
        <taxon>Chlamydiaceae</taxon>
        <taxon>Chlamydia/Chlamydophila group</taxon>
        <taxon>Chlamydia</taxon>
    </lineage>
</organism>
<proteinExistence type="inferred from homology"/>
<feature type="chain" id="PRO_0000155976" description="dCTP deaminase">
    <location>
        <begin position="1"/>
        <end position="190"/>
    </location>
</feature>
<feature type="active site" description="Proton donor/acceptor" evidence="1">
    <location>
        <position position="139"/>
    </location>
</feature>
<feature type="binding site" evidence="1">
    <location>
        <begin position="113"/>
        <end position="118"/>
    </location>
    <ligand>
        <name>dCTP</name>
        <dbReference type="ChEBI" id="CHEBI:61481"/>
    </ligand>
</feature>
<feature type="binding site" evidence="1">
    <location>
        <position position="158"/>
    </location>
    <ligand>
        <name>dCTP</name>
        <dbReference type="ChEBI" id="CHEBI:61481"/>
    </ligand>
</feature>
<feature type="binding site" evidence="1">
    <location>
        <position position="172"/>
    </location>
    <ligand>
        <name>dCTP</name>
        <dbReference type="ChEBI" id="CHEBI:61481"/>
    </ligand>
</feature>
<feature type="binding site" evidence="1">
    <location>
        <position position="181"/>
    </location>
    <ligand>
        <name>dCTP</name>
        <dbReference type="ChEBI" id="CHEBI:61481"/>
    </ligand>
</feature>
<feature type="binding site" evidence="1">
    <location>
        <position position="182"/>
    </location>
    <ligand>
        <name>dCTP</name>
        <dbReference type="ChEBI" id="CHEBI:61481"/>
    </ligand>
</feature>
<comment type="function">
    <text evidence="1">Catalyzes the deamination of dCTP to dUTP.</text>
</comment>
<comment type="catalytic activity">
    <reaction evidence="1">
        <text>dCTP + H2O + H(+) = dUTP + NH4(+)</text>
        <dbReference type="Rhea" id="RHEA:22680"/>
        <dbReference type="ChEBI" id="CHEBI:15377"/>
        <dbReference type="ChEBI" id="CHEBI:15378"/>
        <dbReference type="ChEBI" id="CHEBI:28938"/>
        <dbReference type="ChEBI" id="CHEBI:61481"/>
        <dbReference type="ChEBI" id="CHEBI:61555"/>
        <dbReference type="EC" id="3.5.4.13"/>
    </reaction>
</comment>
<comment type="pathway">
    <text evidence="1">Pyrimidine metabolism; dUMP biosynthesis; dUMP from dCTP (dUTP route): step 1/2.</text>
</comment>
<comment type="subunit">
    <text evidence="1">Homotrimer.</text>
</comment>
<comment type="similarity">
    <text evidence="1">Belongs to the dCTP deaminase family.</text>
</comment>
<evidence type="ECO:0000255" key="1">
    <source>
        <dbReference type="HAMAP-Rule" id="MF_00146"/>
    </source>
</evidence>
<keyword id="KW-0378">Hydrolase</keyword>
<keyword id="KW-0546">Nucleotide metabolism</keyword>
<keyword id="KW-0547">Nucleotide-binding</keyword>
<accession>Q9Z8F1</accession>
<accession>Q9JQ65</accession>
<reference key="1">
    <citation type="journal article" date="1999" name="Nat. Genet.">
        <title>Comparative genomes of Chlamydia pneumoniae and C. trachomatis.</title>
        <authorList>
            <person name="Kalman S."/>
            <person name="Mitchell W.P."/>
            <person name="Marathe R."/>
            <person name="Lammel C.J."/>
            <person name="Fan J."/>
            <person name="Hyman R.W."/>
            <person name="Olinger L."/>
            <person name="Grimwood J."/>
            <person name="Davis R.W."/>
            <person name="Stephens R.S."/>
        </authorList>
    </citation>
    <scope>NUCLEOTIDE SEQUENCE [LARGE SCALE GENOMIC DNA]</scope>
    <source>
        <strain>CWL029</strain>
    </source>
</reference>
<reference key="2">
    <citation type="journal article" date="2000" name="Nucleic Acids Res.">
        <title>Genome sequences of Chlamydia trachomatis MoPn and Chlamydia pneumoniae AR39.</title>
        <authorList>
            <person name="Read T.D."/>
            <person name="Brunham R.C."/>
            <person name="Shen C."/>
            <person name="Gill S.R."/>
            <person name="Heidelberg J.F."/>
            <person name="White O."/>
            <person name="Hickey E.K."/>
            <person name="Peterson J.D."/>
            <person name="Utterback T.R."/>
            <person name="Berry K.J."/>
            <person name="Bass S."/>
            <person name="Linher K.D."/>
            <person name="Weidman J.F."/>
            <person name="Khouri H.M."/>
            <person name="Craven B."/>
            <person name="Bowman C."/>
            <person name="Dodson R.J."/>
            <person name="Gwinn M.L."/>
            <person name="Nelson W.C."/>
            <person name="DeBoy R.T."/>
            <person name="Kolonay J.F."/>
            <person name="McClarty G."/>
            <person name="Salzberg S.L."/>
            <person name="Eisen J.A."/>
            <person name="Fraser C.M."/>
        </authorList>
    </citation>
    <scope>NUCLEOTIDE SEQUENCE [LARGE SCALE GENOMIC DNA]</scope>
    <source>
        <strain>AR39</strain>
    </source>
</reference>
<reference key="3">
    <citation type="journal article" date="2000" name="Nucleic Acids Res.">
        <title>Comparison of whole genome sequences of Chlamydia pneumoniae J138 from Japan and CWL029 from USA.</title>
        <authorList>
            <person name="Shirai M."/>
            <person name="Hirakawa H."/>
            <person name="Kimoto M."/>
            <person name="Tabuchi M."/>
            <person name="Kishi F."/>
            <person name="Ouchi K."/>
            <person name="Shiba T."/>
            <person name="Ishii K."/>
            <person name="Hattori M."/>
            <person name="Kuhara S."/>
            <person name="Nakazawa T."/>
        </authorList>
    </citation>
    <scope>NUCLEOTIDE SEQUENCE [LARGE SCALE GENOMIC DNA]</scope>
    <source>
        <strain>J138</strain>
    </source>
</reference>
<reference key="4">
    <citation type="submission" date="2002-05" db="EMBL/GenBank/DDBJ databases">
        <title>The genome sequence of Chlamydia pneumoniae TW183 and comparison with other Chlamydia strains based on whole genome sequence analysis.</title>
        <authorList>
            <person name="Geng M.M."/>
            <person name="Schuhmacher A."/>
            <person name="Muehldorfer I."/>
            <person name="Bensch K.W."/>
            <person name="Schaefer K.P."/>
            <person name="Schneider S."/>
            <person name="Pohl T."/>
            <person name="Essig A."/>
            <person name="Marre R."/>
            <person name="Melchers K."/>
        </authorList>
    </citation>
    <scope>NUCLEOTIDE SEQUENCE [LARGE SCALE GENOMIC DNA]</scope>
    <source>
        <strain>TW-183</strain>
    </source>
</reference>